<reference key="1">
    <citation type="journal article" date="2005" name="Nature">
        <title>Genome sequence, comparative analysis and haplotype structure of the domestic dog.</title>
        <authorList>
            <person name="Lindblad-Toh K."/>
            <person name="Wade C.M."/>
            <person name="Mikkelsen T.S."/>
            <person name="Karlsson E.K."/>
            <person name="Jaffe D.B."/>
            <person name="Kamal M."/>
            <person name="Clamp M."/>
            <person name="Chang J.L."/>
            <person name="Kulbokas E.J. III"/>
            <person name="Zody M.C."/>
            <person name="Mauceli E."/>
            <person name="Xie X."/>
            <person name="Breen M."/>
            <person name="Wayne R.K."/>
            <person name="Ostrander E.A."/>
            <person name="Ponting C.P."/>
            <person name="Galibert F."/>
            <person name="Smith D.R."/>
            <person name="deJong P.J."/>
            <person name="Kirkness E.F."/>
            <person name="Alvarez P."/>
            <person name="Biagi T."/>
            <person name="Brockman W."/>
            <person name="Butler J."/>
            <person name="Chin C.-W."/>
            <person name="Cook A."/>
            <person name="Cuff J."/>
            <person name="Daly M.J."/>
            <person name="DeCaprio D."/>
            <person name="Gnerre S."/>
            <person name="Grabherr M."/>
            <person name="Kellis M."/>
            <person name="Kleber M."/>
            <person name="Bardeleben C."/>
            <person name="Goodstadt L."/>
            <person name="Heger A."/>
            <person name="Hitte C."/>
            <person name="Kim L."/>
            <person name="Koepfli K.-P."/>
            <person name="Parker H.G."/>
            <person name="Pollinger J.P."/>
            <person name="Searle S.M.J."/>
            <person name="Sutter N.B."/>
            <person name="Thomas R."/>
            <person name="Webber C."/>
            <person name="Baldwin J."/>
            <person name="Abebe A."/>
            <person name="Abouelleil A."/>
            <person name="Aftuck L."/>
            <person name="Ait-Zahra M."/>
            <person name="Aldredge T."/>
            <person name="Allen N."/>
            <person name="An P."/>
            <person name="Anderson S."/>
            <person name="Antoine C."/>
            <person name="Arachchi H."/>
            <person name="Aslam A."/>
            <person name="Ayotte L."/>
            <person name="Bachantsang P."/>
            <person name="Barry A."/>
            <person name="Bayul T."/>
            <person name="Benamara M."/>
            <person name="Berlin A."/>
            <person name="Bessette D."/>
            <person name="Blitshteyn B."/>
            <person name="Bloom T."/>
            <person name="Blye J."/>
            <person name="Boguslavskiy L."/>
            <person name="Bonnet C."/>
            <person name="Boukhgalter B."/>
            <person name="Brown A."/>
            <person name="Cahill P."/>
            <person name="Calixte N."/>
            <person name="Camarata J."/>
            <person name="Cheshatsang Y."/>
            <person name="Chu J."/>
            <person name="Citroen M."/>
            <person name="Collymore A."/>
            <person name="Cooke P."/>
            <person name="Dawoe T."/>
            <person name="Daza R."/>
            <person name="Decktor K."/>
            <person name="DeGray S."/>
            <person name="Dhargay N."/>
            <person name="Dooley K."/>
            <person name="Dooley K."/>
            <person name="Dorje P."/>
            <person name="Dorjee K."/>
            <person name="Dorris L."/>
            <person name="Duffey N."/>
            <person name="Dupes A."/>
            <person name="Egbiremolen O."/>
            <person name="Elong R."/>
            <person name="Falk J."/>
            <person name="Farina A."/>
            <person name="Faro S."/>
            <person name="Ferguson D."/>
            <person name="Ferreira P."/>
            <person name="Fisher S."/>
            <person name="FitzGerald M."/>
            <person name="Foley K."/>
            <person name="Foley C."/>
            <person name="Franke A."/>
            <person name="Friedrich D."/>
            <person name="Gage D."/>
            <person name="Garber M."/>
            <person name="Gearin G."/>
            <person name="Giannoukos G."/>
            <person name="Goode T."/>
            <person name="Goyette A."/>
            <person name="Graham J."/>
            <person name="Grandbois E."/>
            <person name="Gyaltsen K."/>
            <person name="Hafez N."/>
            <person name="Hagopian D."/>
            <person name="Hagos B."/>
            <person name="Hall J."/>
            <person name="Healy C."/>
            <person name="Hegarty R."/>
            <person name="Honan T."/>
            <person name="Horn A."/>
            <person name="Houde N."/>
            <person name="Hughes L."/>
            <person name="Hunnicutt L."/>
            <person name="Husby M."/>
            <person name="Jester B."/>
            <person name="Jones C."/>
            <person name="Kamat A."/>
            <person name="Kanga B."/>
            <person name="Kells C."/>
            <person name="Khazanovich D."/>
            <person name="Kieu A.C."/>
            <person name="Kisner P."/>
            <person name="Kumar M."/>
            <person name="Lance K."/>
            <person name="Landers T."/>
            <person name="Lara M."/>
            <person name="Lee W."/>
            <person name="Leger J.-P."/>
            <person name="Lennon N."/>
            <person name="Leuper L."/>
            <person name="LeVine S."/>
            <person name="Liu J."/>
            <person name="Liu X."/>
            <person name="Lokyitsang Y."/>
            <person name="Lokyitsang T."/>
            <person name="Lui A."/>
            <person name="Macdonald J."/>
            <person name="Major J."/>
            <person name="Marabella R."/>
            <person name="Maru K."/>
            <person name="Matthews C."/>
            <person name="McDonough S."/>
            <person name="Mehta T."/>
            <person name="Meldrim J."/>
            <person name="Melnikov A."/>
            <person name="Meneus L."/>
            <person name="Mihalev A."/>
            <person name="Mihova T."/>
            <person name="Miller K."/>
            <person name="Mittelman R."/>
            <person name="Mlenga V."/>
            <person name="Mulrain L."/>
            <person name="Munson G."/>
            <person name="Navidi A."/>
            <person name="Naylor J."/>
            <person name="Nguyen T."/>
            <person name="Nguyen N."/>
            <person name="Nguyen C."/>
            <person name="Nguyen T."/>
            <person name="Nicol R."/>
            <person name="Norbu N."/>
            <person name="Norbu C."/>
            <person name="Novod N."/>
            <person name="Nyima T."/>
            <person name="Olandt P."/>
            <person name="O'Neill B."/>
            <person name="O'Neill K."/>
            <person name="Osman S."/>
            <person name="Oyono L."/>
            <person name="Patti C."/>
            <person name="Perrin D."/>
            <person name="Phunkhang P."/>
            <person name="Pierre F."/>
            <person name="Priest M."/>
            <person name="Rachupka A."/>
            <person name="Raghuraman S."/>
            <person name="Rameau R."/>
            <person name="Ray V."/>
            <person name="Raymond C."/>
            <person name="Rege F."/>
            <person name="Rise C."/>
            <person name="Rogers J."/>
            <person name="Rogov P."/>
            <person name="Sahalie J."/>
            <person name="Settipalli S."/>
            <person name="Sharpe T."/>
            <person name="Shea T."/>
            <person name="Sheehan M."/>
            <person name="Sherpa N."/>
            <person name="Shi J."/>
            <person name="Shih D."/>
            <person name="Sloan J."/>
            <person name="Smith C."/>
            <person name="Sparrow T."/>
            <person name="Stalker J."/>
            <person name="Stange-Thomann N."/>
            <person name="Stavropoulos S."/>
            <person name="Stone C."/>
            <person name="Stone S."/>
            <person name="Sykes S."/>
            <person name="Tchuinga P."/>
            <person name="Tenzing P."/>
            <person name="Tesfaye S."/>
            <person name="Thoulutsang D."/>
            <person name="Thoulutsang Y."/>
            <person name="Topham K."/>
            <person name="Topping I."/>
            <person name="Tsamla T."/>
            <person name="Vassiliev H."/>
            <person name="Venkataraman V."/>
            <person name="Vo A."/>
            <person name="Wangchuk T."/>
            <person name="Wangdi T."/>
            <person name="Weiand M."/>
            <person name="Wilkinson J."/>
            <person name="Wilson A."/>
            <person name="Yadav S."/>
            <person name="Yang S."/>
            <person name="Yang X."/>
            <person name="Young G."/>
            <person name="Yu Q."/>
            <person name="Zainoun J."/>
            <person name="Zembek L."/>
            <person name="Zimmer A."/>
            <person name="Lander E.S."/>
        </authorList>
    </citation>
    <scope>NUCLEOTIDE SEQUENCE [LARGE SCALE GENOMIC DNA]</scope>
    <source>
        <strain>Boxer</strain>
    </source>
</reference>
<reference key="2">
    <citation type="journal article" date="2000" name="Biochem. Biophys. Res. Commun.">
        <title>Identification of a novel beta-catenin-interacting protein.</title>
        <authorList>
            <person name="Kawajiri A."/>
            <person name="Itoh N."/>
            <person name="Fukata M."/>
            <person name="Nakagawa M."/>
            <person name="Yamaga M."/>
            <person name="Iwamatsu A."/>
            <person name="Kaibuchi K."/>
        </authorList>
    </citation>
    <scope>INTERACTION WITH CDH1; CTNNB1 AND TJP1</scope>
    <scope>SUBCELLULAR LOCATION</scope>
</reference>
<feature type="chain" id="PRO_0000423854" description="Rap guanine nucleotide exchange factor 2">
    <location>
        <begin position="1"/>
        <end position="1498"/>
    </location>
</feature>
<feature type="domain" description="N-terminal Ras-GEF" evidence="5">
    <location>
        <begin position="267"/>
        <end position="380"/>
    </location>
</feature>
<feature type="domain" description="PDZ" evidence="6">
    <location>
        <begin position="385"/>
        <end position="468"/>
    </location>
</feature>
<feature type="domain" description="Ras-associating" evidence="7">
    <location>
        <begin position="606"/>
        <end position="692"/>
    </location>
</feature>
<feature type="domain" description="Ras-GEF" evidence="8">
    <location>
        <begin position="717"/>
        <end position="944"/>
    </location>
</feature>
<feature type="region of interest" description="Disordered" evidence="9">
    <location>
        <begin position="40"/>
        <end position="59"/>
    </location>
</feature>
<feature type="region of interest" description="Disordered" evidence="9">
    <location>
        <begin position="68"/>
        <end position="101"/>
    </location>
</feature>
<feature type="region of interest" description="Disordered" evidence="9">
    <location>
        <begin position="1002"/>
        <end position="1048"/>
    </location>
</feature>
<feature type="region of interest" description="Disordered" evidence="9">
    <location>
        <begin position="1094"/>
        <end position="1159"/>
    </location>
</feature>
<feature type="region of interest" description="Disordered" evidence="9">
    <location>
        <begin position="1224"/>
        <end position="1257"/>
    </location>
</feature>
<feature type="region of interest" description="Disordered" evidence="9">
    <location>
        <begin position="1304"/>
        <end position="1371"/>
    </location>
</feature>
<feature type="region of interest" description="Disordered" evidence="9">
    <location>
        <begin position="1392"/>
        <end position="1498"/>
    </location>
</feature>
<feature type="compositionally biased region" description="Acidic residues" evidence="9">
    <location>
        <begin position="83"/>
        <end position="94"/>
    </location>
</feature>
<feature type="compositionally biased region" description="Low complexity" evidence="9">
    <location>
        <begin position="1110"/>
        <end position="1124"/>
    </location>
</feature>
<feature type="compositionally biased region" description="Low complexity" evidence="9">
    <location>
        <begin position="1140"/>
        <end position="1159"/>
    </location>
</feature>
<feature type="compositionally biased region" description="Polar residues" evidence="9">
    <location>
        <begin position="1246"/>
        <end position="1257"/>
    </location>
</feature>
<feature type="compositionally biased region" description="Polar residues" evidence="9">
    <location>
        <begin position="1306"/>
        <end position="1330"/>
    </location>
</feature>
<feature type="compositionally biased region" description="Low complexity" evidence="9">
    <location>
        <begin position="1354"/>
        <end position="1365"/>
    </location>
</feature>
<feature type="compositionally biased region" description="Acidic residues" evidence="9">
    <location>
        <begin position="1487"/>
        <end position="1498"/>
    </location>
</feature>
<feature type="binding site">
    <location>
        <begin position="135"/>
        <end position="252"/>
    </location>
    <ligand>
        <name>a nucleoside 3',5'-cyclic phosphate</name>
        <dbReference type="ChEBI" id="CHEBI:58464"/>
    </ligand>
</feature>
<feature type="modified residue" description="Phosphoserine" evidence="2">
    <location>
        <position position="501"/>
    </location>
</feature>
<feature type="modified residue" description="Phosphothreonine" evidence="2">
    <location>
        <position position="644"/>
    </location>
</feature>
<feature type="modified residue" description="Phosphoserine" evidence="2">
    <location>
        <position position="806"/>
    </location>
</feature>
<feature type="modified residue" description="Phosphoserine" evidence="2">
    <location>
        <position position="930"/>
    </location>
</feature>
<feature type="modified residue" description="Phosphoserine" evidence="2">
    <location>
        <position position="933"/>
    </location>
</feature>
<feature type="modified residue" description="Phosphoserine" evidence="3">
    <location>
        <position position="1022"/>
    </location>
</feature>
<feature type="modified residue" description="Phosphoserine" evidence="4">
    <location>
        <position position="1079"/>
    </location>
</feature>
<feature type="modified residue" description="Phosphoserine" evidence="4">
    <location>
        <position position="1088"/>
    </location>
</feature>
<feature type="modified residue" description="Phosphoserine" evidence="4">
    <location>
        <position position="1094"/>
    </location>
</feature>
<feature type="modified residue" description="Phosphoserine" evidence="3">
    <location>
        <position position="1115"/>
    </location>
</feature>
<feature type="modified residue" description="Phosphoserine" evidence="3">
    <location>
        <position position="1119"/>
    </location>
</feature>
<feature type="modified residue" description="Phosphoserine" evidence="4">
    <location>
        <position position="1158"/>
    </location>
</feature>
<feature type="modified residue" description="Phosphoserine" evidence="2">
    <location>
        <position position="1175"/>
    </location>
</feature>
<organism>
    <name type="scientific">Canis lupus familiaris</name>
    <name type="common">Dog</name>
    <name type="synonym">Canis familiaris</name>
    <dbReference type="NCBI Taxonomy" id="9615"/>
    <lineage>
        <taxon>Eukaryota</taxon>
        <taxon>Metazoa</taxon>
        <taxon>Chordata</taxon>
        <taxon>Craniata</taxon>
        <taxon>Vertebrata</taxon>
        <taxon>Euteleostomi</taxon>
        <taxon>Mammalia</taxon>
        <taxon>Eutheria</taxon>
        <taxon>Laurasiatheria</taxon>
        <taxon>Carnivora</taxon>
        <taxon>Caniformia</taxon>
        <taxon>Canidae</taxon>
        <taxon>Canis</taxon>
    </lineage>
</organism>
<evidence type="ECO:0000250" key="1"/>
<evidence type="ECO:0000250" key="2">
    <source>
        <dbReference type="UniProtKB" id="F1M386"/>
    </source>
</evidence>
<evidence type="ECO:0000250" key="3">
    <source>
        <dbReference type="UniProtKB" id="Q8CHG7"/>
    </source>
</evidence>
<evidence type="ECO:0000250" key="4">
    <source>
        <dbReference type="UniProtKB" id="Q9Y4G8"/>
    </source>
</evidence>
<evidence type="ECO:0000255" key="5">
    <source>
        <dbReference type="PROSITE-ProRule" id="PRU00135"/>
    </source>
</evidence>
<evidence type="ECO:0000255" key="6">
    <source>
        <dbReference type="PROSITE-ProRule" id="PRU00143"/>
    </source>
</evidence>
<evidence type="ECO:0000255" key="7">
    <source>
        <dbReference type="PROSITE-ProRule" id="PRU00166"/>
    </source>
</evidence>
<evidence type="ECO:0000255" key="8">
    <source>
        <dbReference type="PROSITE-ProRule" id="PRU00168"/>
    </source>
</evidence>
<evidence type="ECO:0000256" key="9">
    <source>
        <dbReference type="SAM" id="MobiDB-lite"/>
    </source>
</evidence>
<evidence type="ECO:0000269" key="10">
    <source>
    </source>
</evidence>
<evidence type="ECO:0000305" key="11"/>
<proteinExistence type="evidence at protein level"/>
<protein>
    <recommendedName>
        <fullName>Rap guanine nucleotide exchange factor 2</fullName>
    </recommendedName>
    <alternativeName>
        <fullName>Cyclic nucleotide ras GEF</fullName>
        <shortName>CNrasGEF</shortName>
    </alternativeName>
    <alternativeName>
        <fullName>Neural RAP guanine nucleotide exchange protein</fullName>
        <shortName>nRap GEP</shortName>
    </alternativeName>
    <alternativeName>
        <fullName>PDZ domain-containing guanine nucleotide exchange factor 1</fullName>
        <shortName>PDZ-GEF1</shortName>
    </alternativeName>
    <alternativeName>
        <fullName>RA-GEF-1</fullName>
    </alternativeName>
    <alternativeName>
        <fullName>Ras/Rap1-associating GEF-1</fullName>
    </alternativeName>
</protein>
<name>RPGF2_CANLF</name>
<accession>F1PBJ0</accession>
<gene>
    <name type="primary">RAPGEF2</name>
    <name type="synonym">NRAPGEP</name>
    <name type="synonym">PDZGEF1</name>
</gene>
<keyword id="KW-0965">Cell junction</keyword>
<keyword id="KW-1003">Cell membrane</keyword>
<keyword id="KW-0963">Cytoplasm</keyword>
<keyword id="KW-0217">Developmental protein</keyword>
<keyword id="KW-0221">Differentiation</keyword>
<keyword id="KW-0967">Endosome</keyword>
<keyword id="KW-0343">GTPase activation</keyword>
<keyword id="KW-0344">Guanine-nucleotide releasing factor</keyword>
<keyword id="KW-0472">Membrane</keyword>
<keyword id="KW-0524">Neurogenesis</keyword>
<keyword id="KW-0597">Phosphoprotein</keyword>
<keyword id="KW-1185">Reference proteome</keyword>
<keyword id="KW-0832">Ubl conjugation</keyword>
<dbReference type="EMBL" id="AAEX03010088">
    <property type="status" value="NOT_ANNOTATED_CDS"/>
    <property type="molecule type" value="Genomic_DNA"/>
</dbReference>
<dbReference type="RefSeq" id="XP_003639545.1">
    <property type="nucleotide sequence ID" value="XM_003639497.5"/>
</dbReference>
<dbReference type="RefSeq" id="XP_038415061.1">
    <property type="nucleotide sequence ID" value="XM_038559133.1"/>
</dbReference>
<dbReference type="RefSeq" id="XP_038544675.1">
    <property type="nucleotide sequence ID" value="XM_038688747.1"/>
</dbReference>
<dbReference type="FunCoup" id="F1PBJ0">
    <property type="interactions" value="1858"/>
</dbReference>
<dbReference type="IntAct" id="F1PBJ0">
    <property type="interactions" value="1"/>
</dbReference>
<dbReference type="STRING" id="9615.ENSCAFP00000066461"/>
<dbReference type="PaxDb" id="9612-ENSCAFP00000012838"/>
<dbReference type="Ensembl" id="ENSCAFT00000013877.5">
    <property type="protein sequence ID" value="ENSCAFP00000012838.3"/>
    <property type="gene ID" value="ENSCAFG00000008719.5"/>
</dbReference>
<dbReference type="Ensembl" id="ENSCAFT00040009936.1">
    <property type="protein sequence ID" value="ENSCAFP00040008617.1"/>
    <property type="gene ID" value="ENSCAFG00040004820.1"/>
</dbReference>
<dbReference type="Ensembl" id="ENSCAFT00845010658.1">
    <property type="protein sequence ID" value="ENSCAFP00845008308.1"/>
    <property type="gene ID" value="ENSCAFG00845005844.1"/>
</dbReference>
<dbReference type="GeneID" id="100856359"/>
<dbReference type="KEGG" id="cfa:100856359"/>
<dbReference type="CTD" id="9693"/>
<dbReference type="VEuPathDB" id="HostDB:ENSCAFG00845005844"/>
<dbReference type="VGNC" id="VGNC:45347">
    <property type="gene designation" value="RAPGEF2"/>
</dbReference>
<dbReference type="eggNOG" id="KOG3542">
    <property type="taxonomic scope" value="Eukaryota"/>
</dbReference>
<dbReference type="GeneTree" id="ENSGT00940000156418"/>
<dbReference type="HOGENOM" id="CLU_002782_0_1_1"/>
<dbReference type="InParanoid" id="F1PBJ0"/>
<dbReference type="OMA" id="SSHMDQM"/>
<dbReference type="OrthoDB" id="546434at2759"/>
<dbReference type="TreeFam" id="TF313184"/>
<dbReference type="Reactome" id="R-CFA-5673001">
    <property type="pathway name" value="RAF/MAP kinase cascade"/>
</dbReference>
<dbReference type="Proteomes" id="UP000002254">
    <property type="component" value="Chromosome 15"/>
</dbReference>
<dbReference type="Proteomes" id="UP000694429">
    <property type="component" value="Unplaced"/>
</dbReference>
<dbReference type="Proteomes" id="UP000694542">
    <property type="component" value="Chromosome 15"/>
</dbReference>
<dbReference type="Proteomes" id="UP000805418">
    <property type="component" value="Chromosome 15"/>
</dbReference>
<dbReference type="Bgee" id="ENSCAFG00000008719">
    <property type="expression patterns" value="Expressed in cardiac muscle of left ventricle and 47 other cell types or tissues"/>
</dbReference>
<dbReference type="GO" id="GO:0016324">
    <property type="term" value="C:apical plasma membrane"/>
    <property type="evidence" value="ECO:0000318"/>
    <property type="project" value="GO_Central"/>
</dbReference>
<dbReference type="GO" id="GO:0005911">
    <property type="term" value="C:cell-cell junction"/>
    <property type="evidence" value="ECO:0000314"/>
    <property type="project" value="UniProtKB"/>
</dbReference>
<dbReference type="GO" id="GO:0005737">
    <property type="term" value="C:cytoplasm"/>
    <property type="evidence" value="ECO:0000250"/>
    <property type="project" value="UniProtKB"/>
</dbReference>
<dbReference type="GO" id="GO:0030139">
    <property type="term" value="C:endocytic vesicle"/>
    <property type="evidence" value="ECO:0000318"/>
    <property type="project" value="GO_Central"/>
</dbReference>
<dbReference type="GO" id="GO:0005770">
    <property type="term" value="C:late endosome"/>
    <property type="evidence" value="ECO:0000250"/>
    <property type="project" value="UniProtKB"/>
</dbReference>
<dbReference type="GO" id="GO:0043005">
    <property type="term" value="C:neuron projection"/>
    <property type="evidence" value="ECO:0000250"/>
    <property type="project" value="UniProtKB"/>
</dbReference>
<dbReference type="GO" id="GO:0043025">
    <property type="term" value="C:neuronal cell body"/>
    <property type="evidence" value="ECO:0000250"/>
    <property type="project" value="UniProtKB"/>
</dbReference>
<dbReference type="GO" id="GO:0048471">
    <property type="term" value="C:perinuclear region of cytoplasm"/>
    <property type="evidence" value="ECO:0000250"/>
    <property type="project" value="UniProtKB"/>
</dbReference>
<dbReference type="GO" id="GO:0005886">
    <property type="term" value="C:plasma membrane"/>
    <property type="evidence" value="ECO:0000250"/>
    <property type="project" value="UniProtKB"/>
</dbReference>
<dbReference type="GO" id="GO:0032991">
    <property type="term" value="C:protein-containing complex"/>
    <property type="evidence" value="ECO:0000250"/>
    <property type="project" value="UniProtKB"/>
</dbReference>
<dbReference type="GO" id="GO:0045202">
    <property type="term" value="C:synapse"/>
    <property type="evidence" value="ECO:0000250"/>
    <property type="project" value="UniProtKB"/>
</dbReference>
<dbReference type="GO" id="GO:0031697">
    <property type="term" value="F:beta-1 adrenergic receptor binding"/>
    <property type="evidence" value="ECO:0000250"/>
    <property type="project" value="UniProtKB"/>
</dbReference>
<dbReference type="GO" id="GO:0030552">
    <property type="term" value="F:cAMP binding"/>
    <property type="evidence" value="ECO:0000250"/>
    <property type="project" value="UniProtKB"/>
</dbReference>
<dbReference type="GO" id="GO:0005096">
    <property type="term" value="F:GTPase activator activity"/>
    <property type="evidence" value="ECO:0007669"/>
    <property type="project" value="UniProtKB-KW"/>
</dbReference>
<dbReference type="GO" id="GO:0005085">
    <property type="term" value="F:guanyl-nucleotide exchange factor activity"/>
    <property type="evidence" value="ECO:0000250"/>
    <property type="project" value="UniProtKB"/>
</dbReference>
<dbReference type="GO" id="GO:0030165">
    <property type="term" value="F:PDZ domain binding"/>
    <property type="evidence" value="ECO:0000250"/>
    <property type="project" value="UniProtKB"/>
</dbReference>
<dbReference type="GO" id="GO:0050699">
    <property type="term" value="F:WW domain binding"/>
    <property type="evidence" value="ECO:0000250"/>
    <property type="project" value="UniProtKB"/>
</dbReference>
<dbReference type="GO" id="GO:0071880">
    <property type="term" value="P:adenylate cyclase-activating adrenergic receptor signaling pathway"/>
    <property type="evidence" value="ECO:0000250"/>
    <property type="project" value="UniProtKB"/>
</dbReference>
<dbReference type="GO" id="GO:0007188">
    <property type="term" value="P:adenylate cyclase-modulating G protein-coupled receptor signaling pathway"/>
    <property type="evidence" value="ECO:0000250"/>
    <property type="project" value="UniProtKB"/>
</dbReference>
<dbReference type="GO" id="GO:0001568">
    <property type="term" value="P:blood vessel development"/>
    <property type="evidence" value="ECO:0000250"/>
    <property type="project" value="UniProtKB"/>
</dbReference>
<dbReference type="GO" id="GO:0031547">
    <property type="term" value="P:brain-derived neurotrophic factor receptor signaling pathway"/>
    <property type="evidence" value="ECO:0000250"/>
    <property type="project" value="UniProtKB"/>
</dbReference>
<dbReference type="GO" id="GO:0071320">
    <property type="term" value="P:cellular response to cAMP"/>
    <property type="evidence" value="ECO:0000250"/>
    <property type="project" value="UniProtKB"/>
</dbReference>
<dbReference type="GO" id="GO:0071321">
    <property type="term" value="P:cellular response to cGMP"/>
    <property type="evidence" value="ECO:0000250"/>
    <property type="project" value="UniProtKB"/>
</dbReference>
<dbReference type="GO" id="GO:1990090">
    <property type="term" value="P:cellular response to nerve growth factor stimulus"/>
    <property type="evidence" value="ECO:0000250"/>
    <property type="project" value="UniProtKB"/>
</dbReference>
<dbReference type="GO" id="GO:0061028">
    <property type="term" value="P:establishment of endothelial barrier"/>
    <property type="evidence" value="ECO:0000250"/>
    <property type="project" value="UniProtKB"/>
</dbReference>
<dbReference type="GO" id="GO:0021884">
    <property type="term" value="P:forebrain neuron development"/>
    <property type="evidence" value="ECO:0000250"/>
    <property type="project" value="UniProtKB"/>
</dbReference>
<dbReference type="GO" id="GO:0007186">
    <property type="term" value="P:G protein-coupled receptor signaling pathway"/>
    <property type="evidence" value="ECO:0000250"/>
    <property type="project" value="UniProtKB"/>
</dbReference>
<dbReference type="GO" id="GO:0008285">
    <property type="term" value="P:negative regulation of cell population proliferation"/>
    <property type="evidence" value="ECO:0000250"/>
    <property type="project" value="UniProtKB"/>
</dbReference>
<dbReference type="GO" id="GO:0050774">
    <property type="term" value="P:negative regulation of dendrite morphogenesis"/>
    <property type="evidence" value="ECO:0000250"/>
    <property type="project" value="UniProtKB"/>
</dbReference>
<dbReference type="GO" id="GO:0048022">
    <property type="term" value="P:negative regulation of melanin biosynthetic process"/>
    <property type="evidence" value="ECO:0000250"/>
    <property type="project" value="UniProtKB"/>
</dbReference>
<dbReference type="GO" id="GO:0038180">
    <property type="term" value="P:nerve growth factor signaling pathway"/>
    <property type="evidence" value="ECO:0000250"/>
    <property type="project" value="UniProtKB"/>
</dbReference>
<dbReference type="GO" id="GO:0001764">
    <property type="term" value="P:neuron migration"/>
    <property type="evidence" value="ECO:0000250"/>
    <property type="project" value="UniProtKB"/>
</dbReference>
<dbReference type="GO" id="GO:0031175">
    <property type="term" value="P:neuron projection development"/>
    <property type="evidence" value="ECO:0000250"/>
    <property type="project" value="UniProtKB"/>
</dbReference>
<dbReference type="GO" id="GO:0007218">
    <property type="term" value="P:neuropeptide signaling pathway"/>
    <property type="evidence" value="ECO:0000250"/>
    <property type="project" value="UniProtKB"/>
</dbReference>
<dbReference type="GO" id="GO:2000481">
    <property type="term" value="P:positive regulation of cAMP-dependent protein kinase activity"/>
    <property type="evidence" value="ECO:0000250"/>
    <property type="project" value="UniProtKB"/>
</dbReference>
<dbReference type="GO" id="GO:2000670">
    <property type="term" value="P:positive regulation of dendritic cell apoptotic process"/>
    <property type="evidence" value="ECO:0000250"/>
    <property type="project" value="UniProtKB"/>
</dbReference>
<dbReference type="GO" id="GO:0070374">
    <property type="term" value="P:positive regulation of ERK1 and ERK2 cascade"/>
    <property type="evidence" value="ECO:0000250"/>
    <property type="project" value="UniProtKB"/>
</dbReference>
<dbReference type="GO" id="GO:0043547">
    <property type="term" value="P:positive regulation of GTPase activity"/>
    <property type="evidence" value="ECO:0000250"/>
    <property type="project" value="UniProtKB"/>
</dbReference>
<dbReference type="GO" id="GO:2001224">
    <property type="term" value="P:positive regulation of neuron migration"/>
    <property type="evidence" value="ECO:0000250"/>
    <property type="project" value="UniProtKB"/>
</dbReference>
<dbReference type="GO" id="GO:0010976">
    <property type="term" value="P:positive regulation of neuron projection development"/>
    <property type="evidence" value="ECO:0000250"/>
    <property type="project" value="UniProtKB"/>
</dbReference>
<dbReference type="GO" id="GO:0032092">
    <property type="term" value="P:positive regulation of protein binding"/>
    <property type="evidence" value="ECO:0000250"/>
    <property type="project" value="UniProtKB"/>
</dbReference>
<dbReference type="GO" id="GO:0045860">
    <property type="term" value="P:positive regulation of protein kinase activity"/>
    <property type="evidence" value="ECO:0000250"/>
    <property type="project" value="UniProtKB"/>
</dbReference>
<dbReference type="GO" id="GO:2001214">
    <property type="term" value="P:positive regulation of vasculogenesis"/>
    <property type="evidence" value="ECO:0000250"/>
    <property type="project" value="UniProtKB"/>
</dbReference>
<dbReference type="GO" id="GO:0032486">
    <property type="term" value="P:Rap protein signal transduction"/>
    <property type="evidence" value="ECO:0000250"/>
    <property type="project" value="UniProtKB"/>
</dbReference>
<dbReference type="GO" id="GO:0007265">
    <property type="term" value="P:Ras protein signal transduction"/>
    <property type="evidence" value="ECO:0000318"/>
    <property type="project" value="GO_Central"/>
</dbReference>
<dbReference type="GO" id="GO:1901888">
    <property type="term" value="P:regulation of cell junction assembly"/>
    <property type="evidence" value="ECO:0000250"/>
    <property type="project" value="UniProtKB"/>
</dbReference>
<dbReference type="GO" id="GO:0021591">
    <property type="term" value="P:ventricular system development"/>
    <property type="evidence" value="ECO:0000250"/>
    <property type="project" value="UniProtKB"/>
</dbReference>
<dbReference type="CDD" id="cd00038">
    <property type="entry name" value="CAP_ED"/>
    <property type="match status" value="1"/>
</dbReference>
<dbReference type="CDD" id="cd06755">
    <property type="entry name" value="PDZ_RapGEF2_RapGEF6-like"/>
    <property type="match status" value="1"/>
</dbReference>
<dbReference type="CDD" id="cd01785">
    <property type="entry name" value="RA_PDZ-GEF1"/>
    <property type="match status" value="1"/>
</dbReference>
<dbReference type="CDD" id="cd00155">
    <property type="entry name" value="RasGEF"/>
    <property type="match status" value="1"/>
</dbReference>
<dbReference type="CDD" id="cd06224">
    <property type="entry name" value="REM"/>
    <property type="match status" value="1"/>
</dbReference>
<dbReference type="FunFam" id="2.60.120.10:FF:000008">
    <property type="entry name" value="Rap guanine nucleotide exchange factor (GEF) 2"/>
    <property type="match status" value="1"/>
</dbReference>
<dbReference type="FunFam" id="1.10.840.10:FF:000001">
    <property type="entry name" value="Rap guanine nucleotide exchange factor (GEF) 6"/>
    <property type="match status" value="1"/>
</dbReference>
<dbReference type="FunFam" id="2.30.42.10:FF:000024">
    <property type="entry name" value="rap guanine nucleotide exchange factor 2 isoform X1"/>
    <property type="match status" value="1"/>
</dbReference>
<dbReference type="FunFam" id="1.20.870.10:FF:000001">
    <property type="entry name" value="rap guanine nucleotide exchange factor 2 isoform X2"/>
    <property type="match status" value="1"/>
</dbReference>
<dbReference type="Gene3D" id="2.30.42.10">
    <property type="match status" value="1"/>
</dbReference>
<dbReference type="Gene3D" id="2.60.120.10">
    <property type="entry name" value="Jelly Rolls"/>
    <property type="match status" value="1"/>
</dbReference>
<dbReference type="Gene3D" id="3.10.20.90">
    <property type="entry name" value="Phosphatidylinositol 3-kinase Catalytic Subunit, Chain A, domain 1"/>
    <property type="match status" value="1"/>
</dbReference>
<dbReference type="Gene3D" id="1.10.840.10">
    <property type="entry name" value="Ras guanine-nucleotide exchange factors catalytic domain"/>
    <property type="match status" value="1"/>
</dbReference>
<dbReference type="Gene3D" id="1.20.870.10">
    <property type="entry name" value="Son of sevenless (SoS) protein Chain: S domain 1"/>
    <property type="match status" value="1"/>
</dbReference>
<dbReference type="InterPro" id="IPR000595">
    <property type="entry name" value="cNMP-bd_dom"/>
</dbReference>
<dbReference type="InterPro" id="IPR018490">
    <property type="entry name" value="cNMP-bd_dom_sf"/>
</dbReference>
<dbReference type="InterPro" id="IPR001478">
    <property type="entry name" value="PDZ"/>
</dbReference>
<dbReference type="InterPro" id="IPR036034">
    <property type="entry name" value="PDZ_sf"/>
</dbReference>
<dbReference type="InterPro" id="IPR000159">
    <property type="entry name" value="RA_dom"/>
</dbReference>
<dbReference type="InterPro" id="IPR000651">
    <property type="entry name" value="Ras-like_Gua-exchang_fac_N"/>
</dbReference>
<dbReference type="InterPro" id="IPR023578">
    <property type="entry name" value="Ras_GEF_dom_sf"/>
</dbReference>
<dbReference type="InterPro" id="IPR001895">
    <property type="entry name" value="RASGEF_cat_dom"/>
</dbReference>
<dbReference type="InterPro" id="IPR036964">
    <property type="entry name" value="RASGEF_cat_dom_sf"/>
</dbReference>
<dbReference type="InterPro" id="IPR014710">
    <property type="entry name" value="RmlC-like_jellyroll"/>
</dbReference>
<dbReference type="InterPro" id="IPR029071">
    <property type="entry name" value="Ubiquitin-like_domsf"/>
</dbReference>
<dbReference type="PANTHER" id="PTHR45161">
    <property type="entry name" value="CYTOSKELETON-ASSOCIATED PROTEIN 4"/>
    <property type="match status" value="1"/>
</dbReference>
<dbReference type="PANTHER" id="PTHR45161:SF2">
    <property type="entry name" value="RAP GUANINE NUCLEOTIDE EXCHANGE FACTOR 2"/>
    <property type="match status" value="1"/>
</dbReference>
<dbReference type="Pfam" id="PF00595">
    <property type="entry name" value="PDZ"/>
    <property type="match status" value="1"/>
</dbReference>
<dbReference type="Pfam" id="PF00788">
    <property type="entry name" value="RA"/>
    <property type="match status" value="1"/>
</dbReference>
<dbReference type="Pfam" id="PF00617">
    <property type="entry name" value="RasGEF"/>
    <property type="match status" value="1"/>
</dbReference>
<dbReference type="Pfam" id="PF00618">
    <property type="entry name" value="RasGEF_N"/>
    <property type="match status" value="1"/>
</dbReference>
<dbReference type="SMART" id="SM00100">
    <property type="entry name" value="cNMP"/>
    <property type="match status" value="1"/>
</dbReference>
<dbReference type="SMART" id="SM00228">
    <property type="entry name" value="PDZ"/>
    <property type="match status" value="1"/>
</dbReference>
<dbReference type="SMART" id="SM00314">
    <property type="entry name" value="RA"/>
    <property type="match status" value="1"/>
</dbReference>
<dbReference type="SMART" id="SM00147">
    <property type="entry name" value="RasGEF"/>
    <property type="match status" value="1"/>
</dbReference>
<dbReference type="SMART" id="SM00229">
    <property type="entry name" value="RasGEFN"/>
    <property type="match status" value="1"/>
</dbReference>
<dbReference type="SUPFAM" id="SSF51206">
    <property type="entry name" value="cAMP-binding domain-like"/>
    <property type="match status" value="1"/>
</dbReference>
<dbReference type="SUPFAM" id="SSF50156">
    <property type="entry name" value="PDZ domain-like"/>
    <property type="match status" value="1"/>
</dbReference>
<dbReference type="SUPFAM" id="SSF48366">
    <property type="entry name" value="Ras GEF"/>
    <property type="match status" value="1"/>
</dbReference>
<dbReference type="SUPFAM" id="SSF54236">
    <property type="entry name" value="Ubiquitin-like"/>
    <property type="match status" value="1"/>
</dbReference>
<dbReference type="PROSITE" id="PS50042">
    <property type="entry name" value="CNMP_BINDING_3"/>
    <property type="match status" value="1"/>
</dbReference>
<dbReference type="PROSITE" id="PS50106">
    <property type="entry name" value="PDZ"/>
    <property type="match status" value="1"/>
</dbReference>
<dbReference type="PROSITE" id="PS50200">
    <property type="entry name" value="RA"/>
    <property type="match status" value="1"/>
</dbReference>
<dbReference type="PROSITE" id="PS50009">
    <property type="entry name" value="RASGEF_CAT"/>
    <property type="match status" value="1"/>
</dbReference>
<dbReference type="PROSITE" id="PS50212">
    <property type="entry name" value="RASGEF_NTER"/>
    <property type="match status" value="1"/>
</dbReference>
<sequence length="1498" mass="167320">MKPLAIPANHGVMGQQEKHSLPADFTKLHLTDSLHPQVTHVSSSHSGCSITSDSGSSSLSDIYQATESEAGDMDLSGLPETAVDSEDDDDEEDIERASDPLMSRDIVRDCLEKDPIDRTDDDIEQLLEFMHQLPAFANMTMSVRRELCAVMVFAVVERAGTIVLNDGEELDSWSVILNGSVEVTYPDGKAEILCMGNSFGVSPTMDKEYMKGVMRTKVDDCQFVCIAQQDYCRILNQVEKNMQKVEEEGEIVMVKEHRELDRTGTRKGHIVIKGTSERLTMHLVEEHSVVDPTFIEDFLLTYRTFLSSPMEVGKKLLEWFNDPSLRDKVTRVVLLWVNNHFNDFEGDPAMTRFLEEFENNLEREKMGGHLRLLNIACAAKAKRRLMTLTKPSREAPLPFILLGGSEKGFGIFVDSVDSGSKATEAGLKRGDQILEVNGQNFENIQLSKAMEILRNNTHLSITVKTNLFVFKELLTRLSEEKRNGAPHLPKIGDIKKASRYSIPDLAVDVEQVIGLEKVNKKSKANTVGGRNKLKKILDKTRISILPQKPYNDIGIGQSQDDSIVGLRQTKHIPTALPVSGTLSSSNPDLLQSHHRILDFSTTPDLPDQVLRVFKADQQSRYIMISKDTTAKEVVIQAIREFAVTATPDQYSLCEVSVTPEGVIKQRRLPDQLSKLADRIQLSGRYYLKNNMETETLCSDEDAQELLRESQISLLQLSTVEVATQLSMRNFELFRNIEPTEYIDDLFKLKSKTSCANLKKFEEVINQETFWVASEILRETNQLKRMKIIKHFIKIALHCRECKNFNSMFAIISGLNLAPVARLRTTWEKLPNKYEKLFQDLQDLFDPSRNMAKYRNVLNSQNLQPPIIPLFPVIKKDLTFLHEGNDSKVDGLVNFEKLRMIAKEIRHVGRMASVNMDPALMFRTRKKKWRSLGSLSQGSTNATVLDVAQTGGHKKRVRRSSFLNAKKLYEDAQMARKVKQYLSNLELEMDEESLQTLSLQCEPATNTLPKNPGDKKPVKSETSPVAPRAGSQQKAQAQPPPPQPQPQHKINQGLQVPAVSLYPSRKKVPVKDLPPFGINSPQALKKILSLSEEGSLERHKKQAEDTISNASSQLSSPPTSPQSSPRKGYTLAPSGTVDNFSDSGHSEISSRSSIVSNSSFDSVPVSLHEERRQRHSVSIVETNLGVGRMERRTMMEPDQYSLGSYAPMAESRGLYATATVISSPSTEELSQDQGDRASLDAADSGRGSWTSCSSGSHDNIQTIQHQRSWETLPFGHTHFDYSGDPAGLWASSSHMDQIMFSDHSTKYNRQNQSRESLEQAQSRASWASSTGYWGEDSEGDTGTIKRRGGKDVSIEAESSSVTSVTTEETKPVPMPAHVAVTSSTAKGLIVRKEGRYREPPPTPPGYIGIPITDFPEGHSHPARKPPDYNVALQRSRMVARPTDTAAPSPIQQPHGHPASGRPVNKPQWHKPNECDPRLAPYQSQGFSTEEDEDEQVSAV</sequence>
<comment type="function">
    <text>Functions as a guanine nucleotide exchange factor (GEF), which activates Rap and Ras family of small GTPases by exchanging bound GDP for free GTP in a cAMP-dependent manner. Serves as a link between cell surface receptors and Rap/Ras GTPases in intracellular signaling cascades. Also acts as an effector for Rap1 by direct association with Rap1-GTP thereby leading to the amplification of Rap1-mediated signaling. Shows weak activity on HRAS. It is controversial whether RAPGEF2 binds cAMP and cGMP or not. Its binding to ligand-activated beta-1 adrenergic receptor ADRB1 leads to the Ras activation through the G(s)-alpha signaling pathway. Involved in the cAMP-induced Ras and Erk1/2 signaling pathway that leads to sustained inhibition of long term melanogenesis by reducing dendrite extension and melanin synthesis. Also provides inhibitory signals for cell proliferation of melanoma cells and promotes their apoptosis in a cAMP-independent nanner. Regulates cAMP-induced neuritogenesis by mediating the Rap1/B-Raf/ERK signaling through a pathway that is independent on both PKA and RAPGEF3/RAPGEF4. Involved in neuron migration and in the formation of the major forebrain fiber connections forming the corpus callosum, the anterior commissure and the hippocampal commissure during brain development. Involved in neuronal growth factor (NGF)-induced sustained activation of Rap1 at late endosomes and in brain-derived neurotrophic factor (BDNF)-induced axon outgrowth of hippocampal neurons. Plays a role in the regulation of embryonic blood vessel formation and in the establishment of basal junction integrity and endothelial barrier function. May be involved in the regulation of the vascular endothelial growth factor receptor KDR and cadherin CDH5 expression at allantois endothelial cell-cell junctions.</text>
</comment>
<comment type="subunit">
    <text evidence="1 10">Found in a complex, at least composed of KIDINS220, MAGI2, NTRK1 and RAPGEF2; the complex is mainly formed at late endosomes in a neuronal growth factor (NGF)-dependent manner. Interacts (via C-terminal domain) with NEDD4 (via WW domains); this interaction leads to ubiquitination and degradation via the proteasome pathway in a cAMP-independent manner. Interacts with MAGI1 (via PDZ domain). Interacts with ADRB1 (via C-terminal PDZ motif); the interaction is direct. Interacts (via Ras-associating domain) with RAP1A (via GTP-bound active form). Interacts weakly with HRAS (via GDP- and GTP-bound forms). Interacts (via C-terminal domain) with MAGI2 (via PDZ and WW domains) (By similarity). Interacts with CDH1, CTNNB1 and TJP1.</text>
</comment>
<comment type="subcellular location">
    <subcellularLocation>
        <location evidence="10">Cell junction</location>
    </subcellularLocation>
    <subcellularLocation>
        <location evidence="1">Cytoplasm</location>
    </subcellularLocation>
    <subcellularLocation>
        <location evidence="1">Cytoplasm</location>
        <location evidence="1">Perinuclear region</location>
    </subcellularLocation>
    <subcellularLocation>
        <location evidence="1">Cell membrane</location>
    </subcellularLocation>
    <subcellularLocation>
        <location evidence="1">Late endosome</location>
    </subcellularLocation>
    <text evidence="1">Associated with the synaptic plasma membrane. Localized diffusely in the cytoplasm before neuronal growth factor (NGF) stimulation. Recruited to late endosomes after NGF stimulation. Colocalized with the high affinity nerve growth factor receptor NTRK1 at late endosomes. Translocated to the perinuclear region in a RAP1A-dependent manner. Translocated to the cell membrane (By similarity). Colocalized with CTNNB1 and TJP1 at cell-cell contacts.</text>
</comment>
<comment type="domain">
    <text evidence="1">The Ras-associating domain is necessary for the Rap guanine nucleotide exchange activity. The N-terminal regionis necessary for cAMP-binding. The PDZ domain is necessary for its targeting to the cell membrane (By similarity).</text>
</comment>
<comment type="PTM">
    <text evidence="1">Ubiquitinated by NEDD4, leading to proteasomal degradation.</text>
</comment>
<comment type="PTM">
    <text evidence="1">Phosphorylation by PLK2 promotes its activity.</text>
</comment>
<comment type="similarity">
    <text evidence="11">Belongs to the RAPGEF2 family.</text>
</comment>